<feature type="chain" id="PRO_1000197721" description="Succinate--CoA ligase [ADP-forming] subunit beta">
    <location>
        <begin position="1"/>
        <end position="379"/>
    </location>
</feature>
<feature type="domain" description="ATP-grasp" evidence="1">
    <location>
        <begin position="9"/>
        <end position="236"/>
    </location>
</feature>
<feature type="binding site" evidence="1">
    <location>
        <position position="46"/>
    </location>
    <ligand>
        <name>ATP</name>
        <dbReference type="ChEBI" id="CHEBI:30616"/>
    </ligand>
</feature>
<feature type="binding site" evidence="1">
    <location>
        <begin position="53"/>
        <end position="55"/>
    </location>
    <ligand>
        <name>ATP</name>
        <dbReference type="ChEBI" id="CHEBI:30616"/>
    </ligand>
</feature>
<feature type="binding site" evidence="1">
    <location>
        <position position="92"/>
    </location>
    <ligand>
        <name>ATP</name>
        <dbReference type="ChEBI" id="CHEBI:30616"/>
    </ligand>
</feature>
<feature type="binding site" evidence="1">
    <location>
        <position position="95"/>
    </location>
    <ligand>
        <name>ATP</name>
        <dbReference type="ChEBI" id="CHEBI:30616"/>
    </ligand>
</feature>
<feature type="binding site" evidence="1">
    <location>
        <position position="100"/>
    </location>
    <ligand>
        <name>ATP</name>
        <dbReference type="ChEBI" id="CHEBI:30616"/>
    </ligand>
</feature>
<feature type="binding site" evidence="1">
    <location>
        <position position="192"/>
    </location>
    <ligand>
        <name>Mg(2+)</name>
        <dbReference type="ChEBI" id="CHEBI:18420"/>
    </ligand>
</feature>
<feature type="binding site" evidence="1">
    <location>
        <position position="206"/>
    </location>
    <ligand>
        <name>Mg(2+)</name>
        <dbReference type="ChEBI" id="CHEBI:18420"/>
    </ligand>
</feature>
<feature type="binding site" evidence="1">
    <location>
        <position position="256"/>
    </location>
    <ligand>
        <name>substrate</name>
        <note>ligand shared with subunit alpha</note>
    </ligand>
</feature>
<feature type="binding site" evidence="1">
    <location>
        <begin position="313"/>
        <end position="315"/>
    </location>
    <ligand>
        <name>substrate</name>
        <note>ligand shared with subunit alpha</note>
    </ligand>
</feature>
<sequence length="379" mass="41956">MKLYEYEGKEIARKYGIETPRGILATSVEDVDKAYRELNTGTVVLKSQVLVGGRGLAGGVKKASNLEEALTKARELFSMSIKGERVEKILVEEAVCISRELYMSLTVDRATRKLVYLASGMGGVEIEELARKHPDKILRIPVDPFIGYSGYMARHALGFLGLQWDKLGQLDNIMRAMYKIMIDYDAELVEFNPLAYTCDGRLTALDAKIIIDDNSLYRHPDLQPLYGRDATPYEKVAKQLDFNYVELDGDIGVISNGAGLTMATMDSILHYGGRPANFLDIGGGATRERVREAVKIVVTHPRVKAVLVNIFGGITRCDEVASGIVEALSETKVAKPIVVRMLGTNEEEGRRILIEHGITVYTEMDEAVLRIIQLVRGVG</sequence>
<name>SUCC_DESA1</name>
<keyword id="KW-0067">ATP-binding</keyword>
<keyword id="KW-0436">Ligase</keyword>
<keyword id="KW-0460">Magnesium</keyword>
<keyword id="KW-0479">Metal-binding</keyword>
<keyword id="KW-0547">Nucleotide-binding</keyword>
<keyword id="KW-0816">Tricarboxylic acid cycle</keyword>
<accession>B8D5I6</accession>
<proteinExistence type="inferred from homology"/>
<gene>
    <name evidence="1" type="primary">sucC</name>
    <name type="ordered locus">DKAM_1041</name>
</gene>
<organism>
    <name type="scientific">Desulfurococcus amylolyticus (strain DSM 18924 / JCM 16383 / VKM B-2413 / 1221n)</name>
    <name type="common">Desulfurococcus kamchatkensis</name>
    <dbReference type="NCBI Taxonomy" id="490899"/>
    <lineage>
        <taxon>Archaea</taxon>
        <taxon>Thermoproteota</taxon>
        <taxon>Thermoprotei</taxon>
        <taxon>Desulfurococcales</taxon>
        <taxon>Desulfurococcaceae</taxon>
        <taxon>Desulfurococcus</taxon>
    </lineage>
</organism>
<comment type="function">
    <text evidence="1">Succinyl-CoA synthetase functions in the citric acid cycle (TCA), coupling the hydrolysis of succinyl-CoA to the synthesis of either ATP or GTP and thus represents the only step of substrate-level phosphorylation in the TCA. The beta subunit provides nucleotide specificity of the enzyme and binds the substrate succinate, while the binding sites for coenzyme A and phosphate are found in the alpha subunit.</text>
</comment>
<comment type="catalytic activity">
    <reaction evidence="1">
        <text>succinate + ATP + CoA = succinyl-CoA + ADP + phosphate</text>
        <dbReference type="Rhea" id="RHEA:17661"/>
        <dbReference type="ChEBI" id="CHEBI:30031"/>
        <dbReference type="ChEBI" id="CHEBI:30616"/>
        <dbReference type="ChEBI" id="CHEBI:43474"/>
        <dbReference type="ChEBI" id="CHEBI:57287"/>
        <dbReference type="ChEBI" id="CHEBI:57292"/>
        <dbReference type="ChEBI" id="CHEBI:456216"/>
        <dbReference type="EC" id="6.2.1.5"/>
    </reaction>
    <physiologicalReaction direction="right-to-left" evidence="1">
        <dbReference type="Rhea" id="RHEA:17663"/>
    </physiologicalReaction>
</comment>
<comment type="catalytic activity">
    <reaction evidence="1">
        <text>GTP + succinate + CoA = succinyl-CoA + GDP + phosphate</text>
        <dbReference type="Rhea" id="RHEA:22120"/>
        <dbReference type="ChEBI" id="CHEBI:30031"/>
        <dbReference type="ChEBI" id="CHEBI:37565"/>
        <dbReference type="ChEBI" id="CHEBI:43474"/>
        <dbReference type="ChEBI" id="CHEBI:57287"/>
        <dbReference type="ChEBI" id="CHEBI:57292"/>
        <dbReference type="ChEBI" id="CHEBI:58189"/>
    </reaction>
    <physiologicalReaction direction="right-to-left" evidence="1">
        <dbReference type="Rhea" id="RHEA:22122"/>
    </physiologicalReaction>
</comment>
<comment type="cofactor">
    <cofactor evidence="1">
        <name>Mg(2+)</name>
        <dbReference type="ChEBI" id="CHEBI:18420"/>
    </cofactor>
    <text evidence="1">Binds 1 Mg(2+) ion per subunit.</text>
</comment>
<comment type="pathway">
    <text evidence="1">Carbohydrate metabolism; tricarboxylic acid cycle; succinate from succinyl-CoA (ligase route): step 1/1.</text>
</comment>
<comment type="subunit">
    <text evidence="1">Heterotetramer of two alpha and two beta subunits.</text>
</comment>
<comment type="similarity">
    <text evidence="1">Belongs to the succinate/malate CoA ligase beta subunit family.</text>
</comment>
<dbReference type="EC" id="6.2.1.5" evidence="1"/>
<dbReference type="EMBL" id="CP001140">
    <property type="protein sequence ID" value="ACL11367.1"/>
    <property type="molecule type" value="Genomic_DNA"/>
</dbReference>
<dbReference type="RefSeq" id="WP_012608708.1">
    <property type="nucleotide sequence ID" value="NC_011766.1"/>
</dbReference>
<dbReference type="SMR" id="B8D5I6"/>
<dbReference type="STRING" id="490899.DKAM_1041"/>
<dbReference type="GeneID" id="7171152"/>
<dbReference type="KEGG" id="dka:DKAM_1041"/>
<dbReference type="eggNOG" id="arCOG01337">
    <property type="taxonomic scope" value="Archaea"/>
</dbReference>
<dbReference type="HOGENOM" id="CLU_037430_0_2_2"/>
<dbReference type="UniPathway" id="UPA00223">
    <property type="reaction ID" value="UER00999"/>
</dbReference>
<dbReference type="Proteomes" id="UP000006903">
    <property type="component" value="Chromosome"/>
</dbReference>
<dbReference type="GO" id="GO:0042709">
    <property type="term" value="C:succinate-CoA ligase complex"/>
    <property type="evidence" value="ECO:0007669"/>
    <property type="project" value="TreeGrafter"/>
</dbReference>
<dbReference type="GO" id="GO:0005524">
    <property type="term" value="F:ATP binding"/>
    <property type="evidence" value="ECO:0007669"/>
    <property type="project" value="UniProtKB-UniRule"/>
</dbReference>
<dbReference type="GO" id="GO:0000287">
    <property type="term" value="F:magnesium ion binding"/>
    <property type="evidence" value="ECO:0007669"/>
    <property type="project" value="UniProtKB-UniRule"/>
</dbReference>
<dbReference type="GO" id="GO:0004775">
    <property type="term" value="F:succinate-CoA ligase (ADP-forming) activity"/>
    <property type="evidence" value="ECO:0007669"/>
    <property type="project" value="UniProtKB-UniRule"/>
</dbReference>
<dbReference type="GO" id="GO:0004776">
    <property type="term" value="F:succinate-CoA ligase (GDP-forming) activity"/>
    <property type="evidence" value="ECO:0007669"/>
    <property type="project" value="RHEA"/>
</dbReference>
<dbReference type="GO" id="GO:0006104">
    <property type="term" value="P:succinyl-CoA metabolic process"/>
    <property type="evidence" value="ECO:0007669"/>
    <property type="project" value="TreeGrafter"/>
</dbReference>
<dbReference type="GO" id="GO:0006099">
    <property type="term" value="P:tricarboxylic acid cycle"/>
    <property type="evidence" value="ECO:0007669"/>
    <property type="project" value="UniProtKB-UniRule"/>
</dbReference>
<dbReference type="FunFam" id="3.30.470.20:FF:000002">
    <property type="entry name" value="Succinate--CoA ligase [ADP-forming] subunit beta"/>
    <property type="match status" value="1"/>
</dbReference>
<dbReference type="FunFam" id="3.40.50.261:FF:000007">
    <property type="entry name" value="Succinate--CoA ligase [ADP-forming] subunit beta"/>
    <property type="match status" value="1"/>
</dbReference>
<dbReference type="Gene3D" id="3.30.1490.20">
    <property type="entry name" value="ATP-grasp fold, A domain"/>
    <property type="match status" value="1"/>
</dbReference>
<dbReference type="Gene3D" id="3.30.470.20">
    <property type="entry name" value="ATP-grasp fold, B domain"/>
    <property type="match status" value="1"/>
</dbReference>
<dbReference type="Gene3D" id="3.40.50.261">
    <property type="entry name" value="Succinyl-CoA synthetase domains"/>
    <property type="match status" value="1"/>
</dbReference>
<dbReference type="HAMAP" id="MF_00558">
    <property type="entry name" value="Succ_CoA_beta"/>
    <property type="match status" value="1"/>
</dbReference>
<dbReference type="InterPro" id="IPR011761">
    <property type="entry name" value="ATP-grasp"/>
</dbReference>
<dbReference type="InterPro" id="IPR013650">
    <property type="entry name" value="ATP-grasp_succ-CoA_synth-type"/>
</dbReference>
<dbReference type="InterPro" id="IPR013815">
    <property type="entry name" value="ATP_grasp_subdomain_1"/>
</dbReference>
<dbReference type="InterPro" id="IPR017866">
    <property type="entry name" value="Succ-CoA_synthase_bsu_CS"/>
</dbReference>
<dbReference type="InterPro" id="IPR005811">
    <property type="entry name" value="SUCC_ACL_C"/>
</dbReference>
<dbReference type="InterPro" id="IPR005809">
    <property type="entry name" value="Succ_CoA_ligase-like_bsu"/>
</dbReference>
<dbReference type="InterPro" id="IPR016102">
    <property type="entry name" value="Succinyl-CoA_synth-like"/>
</dbReference>
<dbReference type="NCBIfam" id="NF001913">
    <property type="entry name" value="PRK00696.1"/>
    <property type="match status" value="1"/>
</dbReference>
<dbReference type="NCBIfam" id="TIGR01016">
    <property type="entry name" value="sucCoAbeta"/>
    <property type="match status" value="1"/>
</dbReference>
<dbReference type="PANTHER" id="PTHR11815:SF10">
    <property type="entry name" value="SUCCINATE--COA LIGASE [GDP-FORMING] SUBUNIT BETA, MITOCHONDRIAL"/>
    <property type="match status" value="1"/>
</dbReference>
<dbReference type="PANTHER" id="PTHR11815">
    <property type="entry name" value="SUCCINYL-COA SYNTHETASE BETA CHAIN"/>
    <property type="match status" value="1"/>
</dbReference>
<dbReference type="Pfam" id="PF08442">
    <property type="entry name" value="ATP-grasp_2"/>
    <property type="match status" value="1"/>
</dbReference>
<dbReference type="Pfam" id="PF00549">
    <property type="entry name" value="Ligase_CoA"/>
    <property type="match status" value="1"/>
</dbReference>
<dbReference type="PIRSF" id="PIRSF001554">
    <property type="entry name" value="SucCS_beta"/>
    <property type="match status" value="1"/>
</dbReference>
<dbReference type="SUPFAM" id="SSF56059">
    <property type="entry name" value="Glutathione synthetase ATP-binding domain-like"/>
    <property type="match status" value="1"/>
</dbReference>
<dbReference type="SUPFAM" id="SSF52210">
    <property type="entry name" value="Succinyl-CoA synthetase domains"/>
    <property type="match status" value="1"/>
</dbReference>
<dbReference type="PROSITE" id="PS50975">
    <property type="entry name" value="ATP_GRASP"/>
    <property type="match status" value="1"/>
</dbReference>
<dbReference type="PROSITE" id="PS01217">
    <property type="entry name" value="SUCCINYL_COA_LIG_3"/>
    <property type="match status" value="1"/>
</dbReference>
<protein>
    <recommendedName>
        <fullName evidence="1">Succinate--CoA ligase [ADP-forming] subunit beta</fullName>
        <ecNumber evidence="1">6.2.1.5</ecNumber>
    </recommendedName>
    <alternativeName>
        <fullName evidence="1">Succinyl-CoA synthetase subunit beta</fullName>
        <shortName evidence="1">SCS-beta</shortName>
    </alternativeName>
</protein>
<reference key="1">
    <citation type="journal article" date="2009" name="J. Bacteriol.">
        <title>Complete genome sequence of the anaerobic, protein-degrading hyperthermophilic crenarchaeon Desulfurococcus kamchatkensis.</title>
        <authorList>
            <person name="Ravin N.V."/>
            <person name="Mardanov A.V."/>
            <person name="Beletsky A.V."/>
            <person name="Kublanov I.V."/>
            <person name="Kolganova T.V."/>
            <person name="Lebedinsky A.V."/>
            <person name="Chernyh N.A."/>
            <person name="Bonch-Osmolovskaya E.A."/>
            <person name="Skryabin K.G."/>
        </authorList>
    </citation>
    <scope>NUCLEOTIDE SEQUENCE [LARGE SCALE GENOMIC DNA]</scope>
    <source>
        <strain>DSM 18924 / JCM 16383 / VKM B-2413 / 1221n</strain>
    </source>
</reference>
<evidence type="ECO:0000255" key="1">
    <source>
        <dbReference type="HAMAP-Rule" id="MF_00558"/>
    </source>
</evidence>